<reference key="1">
    <citation type="journal article" date="1992" name="Proc. Natl. Acad. Sci. U.S.A.">
        <title>Diversification of the Wnt gene family on the ancestral lineage of vertebrates.</title>
        <authorList>
            <person name="Sidow A."/>
        </authorList>
    </citation>
    <scope>NUCLEOTIDE SEQUENCE [GENOMIC DNA]</scope>
</reference>
<keyword id="KW-0217">Developmental protein</keyword>
<keyword id="KW-1015">Disulfide bond</keyword>
<keyword id="KW-0272">Extracellular matrix</keyword>
<keyword id="KW-0325">Glycoprotein</keyword>
<keyword id="KW-0449">Lipoprotein</keyword>
<keyword id="KW-1185">Reference proteome</keyword>
<keyword id="KW-0964">Secreted</keyword>
<keyword id="KW-0879">Wnt signaling pathway</keyword>
<proteinExistence type="inferred from homology"/>
<evidence type="ECO:0000250" key="1">
    <source>
        <dbReference type="UniProtKB" id="P27467"/>
    </source>
</evidence>
<evidence type="ECO:0000250" key="2">
    <source>
        <dbReference type="UniProtKB" id="P28026"/>
    </source>
</evidence>
<evidence type="ECO:0000250" key="3">
    <source>
        <dbReference type="UniProtKB" id="P56704"/>
    </source>
</evidence>
<evidence type="ECO:0000255" key="4"/>
<evidence type="ECO:0000305" key="5"/>
<organism>
    <name type="scientific">Strongylocentrotus purpuratus</name>
    <name type="common">Purple sea urchin</name>
    <dbReference type="NCBI Taxonomy" id="7668"/>
    <lineage>
        <taxon>Eukaryota</taxon>
        <taxon>Metazoa</taxon>
        <taxon>Echinodermata</taxon>
        <taxon>Eleutherozoa</taxon>
        <taxon>Echinozoa</taxon>
        <taxon>Echinoidea</taxon>
        <taxon>Euechinoidea</taxon>
        <taxon>Echinacea</taxon>
        <taxon>Camarodonta</taxon>
        <taxon>Echinidea</taxon>
        <taxon>Strongylocentrotidae</taxon>
        <taxon>Strongylocentrotus</taxon>
    </lineage>
</organism>
<feature type="chain" id="PRO_0000200608" description="Protein Wnt-2">
    <location>
        <begin position="1" status="less than"/>
        <end position="115" status="greater than"/>
    </location>
</feature>
<feature type="lipid moiety-binding region" description="O-palmitoleoyl serine; by PORCN" evidence="3">
    <location>
        <position position="1"/>
    </location>
</feature>
<feature type="glycosylation site" description="N-linked (GlcNAc...) asparagine" evidence="4">
    <location>
        <position position="82"/>
    </location>
</feature>
<feature type="disulfide bond" evidence="2">
    <location>
        <begin position="81"/>
        <end position="96"/>
    </location>
</feature>
<feature type="non-terminal residue">
    <location>
        <position position="1"/>
    </location>
</feature>
<feature type="non-terminal residue">
    <location>
        <position position="115"/>
    </location>
</feature>
<accession>P28095</accession>
<protein>
    <recommendedName>
        <fullName>Protein Wnt-2</fullName>
    </recommendedName>
</protein>
<sequence length="115" mass="13207">SGSCTSQVCWNAMPKLRQISEALLKSHIQAYHMMYSKRSLKLRPLQERNRNPSKTDIVYLTPDYCEPNKRHGSLGTHGRRCNKTSTGVNGCRLMCCGRGYQTMLRHVTESCHCRF</sequence>
<gene>
    <name type="primary">WNT-2</name>
</gene>
<dbReference type="EMBL" id="M91303">
    <property type="protein sequence ID" value="AAA30084.1"/>
    <property type="molecule type" value="Genomic_DNA"/>
</dbReference>
<dbReference type="SMR" id="P28095"/>
<dbReference type="STRING" id="7668.P28095"/>
<dbReference type="GlyCosmos" id="P28095">
    <property type="glycosylation" value="1 site, No reported glycans"/>
</dbReference>
<dbReference type="eggNOG" id="KOG3913">
    <property type="taxonomic scope" value="Eukaryota"/>
</dbReference>
<dbReference type="HOGENOM" id="CLU_1167164_0_0_1"/>
<dbReference type="InParanoid" id="P28095"/>
<dbReference type="Proteomes" id="UP000007110">
    <property type="component" value="Unassembled WGS sequence"/>
</dbReference>
<dbReference type="GO" id="GO:0005576">
    <property type="term" value="C:extracellular region"/>
    <property type="evidence" value="ECO:0007669"/>
    <property type="project" value="UniProtKB-KW"/>
</dbReference>
<dbReference type="GO" id="GO:0005102">
    <property type="term" value="F:signaling receptor binding"/>
    <property type="evidence" value="ECO:0007669"/>
    <property type="project" value="InterPro"/>
</dbReference>
<dbReference type="GO" id="GO:0016055">
    <property type="term" value="P:Wnt signaling pathway"/>
    <property type="evidence" value="ECO:0007669"/>
    <property type="project" value="UniProtKB-KW"/>
</dbReference>
<dbReference type="Gene3D" id="3.30.2460.20">
    <property type="match status" value="1"/>
</dbReference>
<dbReference type="InterPro" id="IPR005817">
    <property type="entry name" value="Wnt"/>
</dbReference>
<dbReference type="InterPro" id="IPR043158">
    <property type="entry name" value="Wnt_C"/>
</dbReference>
<dbReference type="PANTHER" id="PTHR12027:SF37">
    <property type="entry name" value="PROTEIN WNT"/>
    <property type="match status" value="1"/>
</dbReference>
<dbReference type="PANTHER" id="PTHR12027">
    <property type="entry name" value="WNT RELATED"/>
    <property type="match status" value="1"/>
</dbReference>
<dbReference type="Pfam" id="PF00110">
    <property type="entry name" value="wnt"/>
    <property type="match status" value="1"/>
</dbReference>
<dbReference type="SMART" id="SM00097">
    <property type="entry name" value="WNT1"/>
    <property type="match status" value="1"/>
</dbReference>
<comment type="function">
    <text>Ligand for members of the frizzled family of seven transmembrane receptors. Probable developmental protein. May be a signaling molecule which affects the development of discrete regions of tissues. Is likely to signal over only few cell diameters.</text>
</comment>
<comment type="subcellular location">
    <subcellularLocation>
        <location>Secreted</location>
        <location>Extracellular space</location>
        <location>Extracellular matrix</location>
    </subcellularLocation>
</comment>
<comment type="PTM">
    <text evidence="1 3">Palmitoleoylation is required for efficient binding to frizzled receptors. Depalmitoleoylation leads to Wnt signaling pathway inhibition.</text>
</comment>
<comment type="similarity">
    <text evidence="5">Belongs to the Wnt family.</text>
</comment>
<name>WNT2_STRPU</name>